<evidence type="ECO:0000250" key="1"/>
<evidence type="ECO:0000305" key="2"/>
<feature type="chain" id="PRO_0000150404" description="Probable cobalt-factor III C(17)-methyltransferase">
    <location>
        <begin position="1"/>
        <end position="351"/>
    </location>
</feature>
<keyword id="KW-0169">Cobalamin biosynthesis</keyword>
<keyword id="KW-0489">Methyltransferase</keyword>
<keyword id="KW-1185">Reference proteome</keyword>
<keyword id="KW-0949">S-adenosyl-L-methionine</keyword>
<keyword id="KW-0808">Transferase</keyword>
<dbReference type="EC" id="2.1.1.-"/>
<dbReference type="EMBL" id="AE000666">
    <property type="protein sequence ID" value="AAB85880.1"/>
    <property type="molecule type" value="Genomic_DNA"/>
</dbReference>
<dbReference type="PIR" id="H69053">
    <property type="entry name" value="H69053"/>
</dbReference>
<dbReference type="RefSeq" id="WP_010877015.1">
    <property type="nucleotide sequence ID" value="NC_000916.1"/>
</dbReference>
<dbReference type="SMR" id="O27454"/>
<dbReference type="FunCoup" id="O27454">
    <property type="interactions" value="90"/>
</dbReference>
<dbReference type="STRING" id="187420.MTH_1403"/>
<dbReference type="PaxDb" id="187420-MTH_1403"/>
<dbReference type="EnsemblBacteria" id="AAB85880">
    <property type="protein sequence ID" value="AAB85880"/>
    <property type="gene ID" value="MTH_1403"/>
</dbReference>
<dbReference type="GeneID" id="82297840"/>
<dbReference type="KEGG" id="mth:MTH_1403"/>
<dbReference type="PATRIC" id="fig|187420.15.peg.1368"/>
<dbReference type="HOGENOM" id="CLU_047948_0_0_2"/>
<dbReference type="InParanoid" id="O27454"/>
<dbReference type="UniPathway" id="UPA00148">
    <property type="reaction ID" value="UER00225"/>
</dbReference>
<dbReference type="Proteomes" id="UP000005223">
    <property type="component" value="Chromosome"/>
</dbReference>
<dbReference type="GO" id="GO:0008168">
    <property type="term" value="F:methyltransferase activity"/>
    <property type="evidence" value="ECO:0007669"/>
    <property type="project" value="UniProtKB-KW"/>
</dbReference>
<dbReference type="GO" id="GO:0009236">
    <property type="term" value="P:cobalamin biosynthetic process"/>
    <property type="evidence" value="ECO:0007669"/>
    <property type="project" value="UniProtKB-UniPathway"/>
</dbReference>
<dbReference type="GO" id="GO:0032259">
    <property type="term" value="P:methylation"/>
    <property type="evidence" value="ECO:0007669"/>
    <property type="project" value="UniProtKB-KW"/>
</dbReference>
<dbReference type="CDD" id="cd11646">
    <property type="entry name" value="Precorrin_3B_C17_MT"/>
    <property type="match status" value="1"/>
</dbReference>
<dbReference type="Gene3D" id="3.40.1010.10">
    <property type="entry name" value="Cobalt-precorrin-4 Transmethylase, Domain 1"/>
    <property type="match status" value="1"/>
</dbReference>
<dbReference type="Gene3D" id="3.30.950.10">
    <property type="entry name" value="Methyltransferase, Cobalt-precorrin-4 Transmethylase, Domain 2"/>
    <property type="match status" value="1"/>
</dbReference>
<dbReference type="InterPro" id="IPR000878">
    <property type="entry name" value="4pyrrol_Mease"/>
</dbReference>
<dbReference type="InterPro" id="IPR035996">
    <property type="entry name" value="4pyrrol_Methylase_sf"/>
</dbReference>
<dbReference type="InterPro" id="IPR014777">
    <property type="entry name" value="4pyrrole_Mease_sub1"/>
</dbReference>
<dbReference type="InterPro" id="IPR014776">
    <property type="entry name" value="4pyrrole_Mease_sub2"/>
</dbReference>
<dbReference type="InterPro" id="IPR006363">
    <property type="entry name" value="Cbl_synth_CobJ/CibH_dom"/>
</dbReference>
<dbReference type="InterPro" id="IPR051810">
    <property type="entry name" value="Precorrin_MeTrfase"/>
</dbReference>
<dbReference type="InterPro" id="IPR007212">
    <property type="entry name" value="Zf-like"/>
</dbReference>
<dbReference type="NCBIfam" id="TIGR01466">
    <property type="entry name" value="cobJ_cbiH"/>
    <property type="match status" value="1"/>
</dbReference>
<dbReference type="PANTHER" id="PTHR47036">
    <property type="entry name" value="COBALT-FACTOR III C(17)-METHYLTRANSFERASE-RELATED"/>
    <property type="match status" value="1"/>
</dbReference>
<dbReference type="PANTHER" id="PTHR47036:SF1">
    <property type="entry name" value="COBALT-FACTOR III C(17)-METHYLTRANSFERASE-RELATED"/>
    <property type="match status" value="1"/>
</dbReference>
<dbReference type="Pfam" id="PF00590">
    <property type="entry name" value="TP_methylase"/>
    <property type="match status" value="1"/>
</dbReference>
<dbReference type="Pfam" id="PF04071">
    <property type="entry name" value="zf-like"/>
    <property type="match status" value="1"/>
</dbReference>
<dbReference type="SUPFAM" id="SSF53790">
    <property type="entry name" value="Tetrapyrrole methylase"/>
    <property type="match status" value="1"/>
</dbReference>
<reference key="1">
    <citation type="journal article" date="1997" name="J. Bacteriol.">
        <title>Complete genome sequence of Methanobacterium thermoautotrophicum deltaH: functional analysis and comparative genomics.</title>
        <authorList>
            <person name="Smith D.R."/>
            <person name="Doucette-Stamm L.A."/>
            <person name="Deloughery C."/>
            <person name="Lee H.-M."/>
            <person name="Dubois J."/>
            <person name="Aldredge T."/>
            <person name="Bashirzadeh R."/>
            <person name="Blakely D."/>
            <person name="Cook R."/>
            <person name="Gilbert K."/>
            <person name="Harrison D."/>
            <person name="Hoang L."/>
            <person name="Keagle P."/>
            <person name="Lumm W."/>
            <person name="Pothier B."/>
            <person name="Qiu D."/>
            <person name="Spadafora R."/>
            <person name="Vicare R."/>
            <person name="Wang Y."/>
            <person name="Wierzbowski J."/>
            <person name="Gibson R."/>
            <person name="Jiwani N."/>
            <person name="Caruso A."/>
            <person name="Bush D."/>
            <person name="Safer H."/>
            <person name="Patwell D."/>
            <person name="Prabhakar S."/>
            <person name="McDougall S."/>
            <person name="Shimer G."/>
            <person name="Goyal A."/>
            <person name="Pietrovski S."/>
            <person name="Church G.M."/>
            <person name="Daniels C.J."/>
            <person name="Mao J.-I."/>
            <person name="Rice P."/>
            <person name="Noelling J."/>
            <person name="Reeve J.N."/>
        </authorList>
    </citation>
    <scope>NUCLEOTIDE SEQUENCE [LARGE SCALE GENOMIC DNA]</scope>
    <source>
        <strain>ATCC 29096 / DSM 1053 / JCM 10044 / NBRC 100330 / Delta H</strain>
    </source>
</reference>
<organism>
    <name type="scientific">Methanothermobacter thermautotrophicus (strain ATCC 29096 / DSM 1053 / JCM 10044 / NBRC 100330 / Delta H)</name>
    <name type="common">Methanobacterium thermoautotrophicum</name>
    <dbReference type="NCBI Taxonomy" id="187420"/>
    <lineage>
        <taxon>Archaea</taxon>
        <taxon>Methanobacteriati</taxon>
        <taxon>Methanobacteriota</taxon>
        <taxon>Methanomada group</taxon>
        <taxon>Methanobacteria</taxon>
        <taxon>Methanobacteriales</taxon>
        <taxon>Methanobacteriaceae</taxon>
        <taxon>Methanothermobacter</taxon>
    </lineage>
</organism>
<comment type="function">
    <text evidence="1">Methyltransferase that likely catalyzes the ring contraction and methylation of C-17 in cobalt-factor III to form cobalt-factor IV. May also convert cobalt-precorrin-3 to cobalt-precorrin-4 (By similarity).</text>
</comment>
<comment type="catalytic activity">
    <reaction>
        <text>Co(II)-factor III + S-adenosyl-L-methionine + H(+) = Co(II)-factor IV + S-adenosyl-L-homocysteine</text>
        <dbReference type="Rhea" id="RHEA:45852"/>
        <dbReference type="ChEBI" id="CHEBI:15378"/>
        <dbReference type="ChEBI" id="CHEBI:57856"/>
        <dbReference type="ChEBI" id="CHEBI:59789"/>
        <dbReference type="ChEBI" id="CHEBI:73299"/>
        <dbReference type="ChEBI" id="CHEBI:85471"/>
    </reaction>
</comment>
<comment type="pathway">
    <text>Cofactor biosynthesis; adenosylcobalamin biosynthesis; cob(II)yrinate a,c-diamide from sirohydrochlorin (anaerobic route): step 3/10.</text>
</comment>
<comment type="similarity">
    <text evidence="2">Belongs to the precorrin methyltransferase family.</text>
</comment>
<name>CBIH_METTH</name>
<accession>O27454</accession>
<gene>
    <name type="primary">cbiH</name>
    <name type="synonym">cobJ</name>
    <name type="ordered locus">MTH_1403</name>
</gene>
<protein>
    <recommendedName>
        <fullName>Probable cobalt-factor III C(17)-methyltransferase</fullName>
        <ecNumber>2.1.1.-</ecNumber>
    </recommendedName>
    <alternativeName>
        <fullName>Cobalt-precorrin-3 methyltransferase</fullName>
        <shortName>Cobalt-precorrin-3 methylase</shortName>
    </alternativeName>
</protein>
<proteinExistence type="inferred from homology"/>
<sequence>MIRIIGIGPARDDITIRALRALEDSDVVIGYARYIRQIEDLLDGKEVIRSGMGDEIERVELAIEKHREGLDVALVSSGDPGVYGMANVFFQIFDKYSGIEFEVIPGVTAVNYAASKLGAPLHDFAVISLSDILTPLSEIMAKIRAAAESGMIIALYNPLGKRRKRPFREAVEILRSLLPPQTPVGIVRTVDGAPDVRIVDLESLDESLVDMSTIVLVGNVTTYTRDGQMITPRGYAVETPLHELAREFYEENPLGKASGPDENCEFYPCHFEGQNCAFCYCPFYPCAEGSTGGRWIRDRGVWSCQDCTWIHTDSAVECVKRSLGDIISGPDDLMDKKRELLKLRRECLMRG</sequence>